<reference key="1">
    <citation type="journal article" date="2000" name="Nucleic Acids Res.">
        <title>Complete genome sequence of the alkaliphilic bacterium Bacillus halodurans and genomic sequence comparison with Bacillus subtilis.</title>
        <authorList>
            <person name="Takami H."/>
            <person name="Nakasone K."/>
            <person name="Takaki Y."/>
            <person name="Maeno G."/>
            <person name="Sasaki R."/>
            <person name="Masui N."/>
            <person name="Fuji F."/>
            <person name="Hirama C."/>
            <person name="Nakamura Y."/>
            <person name="Ogasawara N."/>
            <person name="Kuhara S."/>
            <person name="Horikoshi K."/>
        </authorList>
    </citation>
    <scope>NUCLEOTIDE SEQUENCE [LARGE SCALE GENOMIC DNA]</scope>
    <source>
        <strain>ATCC BAA-125 / DSM 18197 / FERM 7344 / JCM 9153 / C-125</strain>
    </source>
</reference>
<sequence>MARRGRPKRRKVCYFTVNKIEKIDYKDVDLLKKFVSERGKILPRRVTGTSAKYQRQLTTAIKRARQIALLPYVTDNN</sequence>
<evidence type="ECO:0000255" key="1">
    <source>
        <dbReference type="HAMAP-Rule" id="MF_00270"/>
    </source>
</evidence>
<evidence type="ECO:0000305" key="2"/>
<keyword id="KW-1185">Reference proteome</keyword>
<keyword id="KW-0687">Ribonucleoprotein</keyword>
<keyword id="KW-0689">Ribosomal protein</keyword>
<keyword id="KW-0694">RNA-binding</keyword>
<keyword id="KW-0699">rRNA-binding</keyword>
<accession>Q9K5P0</accession>
<protein>
    <recommendedName>
        <fullName evidence="1">Small ribosomal subunit protein bS18</fullName>
    </recommendedName>
    <alternativeName>
        <fullName evidence="2">30S ribosomal protein S18</fullName>
    </alternativeName>
</protein>
<feature type="chain" id="PRO_0000111113" description="Small ribosomal subunit protein bS18">
    <location>
        <begin position="1"/>
        <end position="77"/>
    </location>
</feature>
<organism>
    <name type="scientific">Halalkalibacterium halodurans (strain ATCC BAA-125 / DSM 18197 / FERM 7344 / JCM 9153 / C-125)</name>
    <name type="common">Bacillus halodurans</name>
    <dbReference type="NCBI Taxonomy" id="272558"/>
    <lineage>
        <taxon>Bacteria</taxon>
        <taxon>Bacillati</taxon>
        <taxon>Bacillota</taxon>
        <taxon>Bacilli</taxon>
        <taxon>Bacillales</taxon>
        <taxon>Bacillaceae</taxon>
        <taxon>Halalkalibacterium (ex Joshi et al. 2022)</taxon>
    </lineage>
</organism>
<name>RS18_HALH5</name>
<gene>
    <name evidence="1" type="primary">rpsR</name>
    <name type="ordered locus">BH4048</name>
</gene>
<dbReference type="EMBL" id="BA000004">
    <property type="protein sequence ID" value="BAB07767.1"/>
    <property type="molecule type" value="Genomic_DNA"/>
</dbReference>
<dbReference type="PIR" id="H84155">
    <property type="entry name" value="H84155"/>
</dbReference>
<dbReference type="RefSeq" id="WP_010900172.1">
    <property type="nucleotide sequence ID" value="NC_002570.2"/>
</dbReference>
<dbReference type="SMR" id="Q9K5P0"/>
<dbReference type="STRING" id="272558.gene:10729966"/>
<dbReference type="GeneID" id="87599631"/>
<dbReference type="KEGG" id="bha:BH4048"/>
<dbReference type="eggNOG" id="COG0238">
    <property type="taxonomic scope" value="Bacteria"/>
</dbReference>
<dbReference type="HOGENOM" id="CLU_148710_2_2_9"/>
<dbReference type="OrthoDB" id="9812008at2"/>
<dbReference type="Proteomes" id="UP000001258">
    <property type="component" value="Chromosome"/>
</dbReference>
<dbReference type="GO" id="GO:0022627">
    <property type="term" value="C:cytosolic small ribosomal subunit"/>
    <property type="evidence" value="ECO:0007669"/>
    <property type="project" value="TreeGrafter"/>
</dbReference>
<dbReference type="GO" id="GO:0070181">
    <property type="term" value="F:small ribosomal subunit rRNA binding"/>
    <property type="evidence" value="ECO:0007669"/>
    <property type="project" value="TreeGrafter"/>
</dbReference>
<dbReference type="GO" id="GO:0003735">
    <property type="term" value="F:structural constituent of ribosome"/>
    <property type="evidence" value="ECO:0007669"/>
    <property type="project" value="InterPro"/>
</dbReference>
<dbReference type="GO" id="GO:0006412">
    <property type="term" value="P:translation"/>
    <property type="evidence" value="ECO:0007669"/>
    <property type="project" value="UniProtKB-UniRule"/>
</dbReference>
<dbReference type="FunFam" id="4.10.640.10:FF:000003">
    <property type="entry name" value="30S ribosomal protein S18"/>
    <property type="match status" value="1"/>
</dbReference>
<dbReference type="Gene3D" id="4.10.640.10">
    <property type="entry name" value="Ribosomal protein S18"/>
    <property type="match status" value="1"/>
</dbReference>
<dbReference type="HAMAP" id="MF_00270">
    <property type="entry name" value="Ribosomal_bS18"/>
    <property type="match status" value="1"/>
</dbReference>
<dbReference type="InterPro" id="IPR001648">
    <property type="entry name" value="Ribosomal_bS18"/>
</dbReference>
<dbReference type="InterPro" id="IPR018275">
    <property type="entry name" value="Ribosomal_bS18_CS"/>
</dbReference>
<dbReference type="InterPro" id="IPR036870">
    <property type="entry name" value="Ribosomal_bS18_sf"/>
</dbReference>
<dbReference type="NCBIfam" id="TIGR00165">
    <property type="entry name" value="S18"/>
    <property type="match status" value="1"/>
</dbReference>
<dbReference type="PANTHER" id="PTHR13479">
    <property type="entry name" value="30S RIBOSOMAL PROTEIN S18"/>
    <property type="match status" value="1"/>
</dbReference>
<dbReference type="PANTHER" id="PTHR13479:SF40">
    <property type="entry name" value="SMALL RIBOSOMAL SUBUNIT PROTEIN BS18M"/>
    <property type="match status" value="1"/>
</dbReference>
<dbReference type="Pfam" id="PF01084">
    <property type="entry name" value="Ribosomal_S18"/>
    <property type="match status" value="1"/>
</dbReference>
<dbReference type="PRINTS" id="PR00974">
    <property type="entry name" value="RIBOSOMALS18"/>
</dbReference>
<dbReference type="SUPFAM" id="SSF46911">
    <property type="entry name" value="Ribosomal protein S18"/>
    <property type="match status" value="1"/>
</dbReference>
<dbReference type="PROSITE" id="PS00057">
    <property type="entry name" value="RIBOSOMAL_S18"/>
    <property type="match status" value="1"/>
</dbReference>
<comment type="function">
    <text evidence="1">Binds as a heterodimer with protein bS6 to the central domain of the 16S rRNA, where it helps stabilize the platform of the 30S subunit.</text>
</comment>
<comment type="subunit">
    <text evidence="1">Part of the 30S ribosomal subunit. Forms a tight heterodimer with protein bS6.</text>
</comment>
<comment type="similarity">
    <text evidence="1">Belongs to the bacterial ribosomal protein bS18 family.</text>
</comment>
<proteinExistence type="inferred from homology"/>